<comment type="function">
    <text evidence="1">Catalyzes the attachment of serine to tRNA(Ser). Is also able to aminoacylate tRNA(Sec) with serine, to form the misacylated tRNA L-seryl-tRNA(Sec), which will be further converted into selenocysteinyl-tRNA(Sec).</text>
</comment>
<comment type="catalytic activity">
    <reaction evidence="1">
        <text>tRNA(Ser) + L-serine + ATP = L-seryl-tRNA(Ser) + AMP + diphosphate + H(+)</text>
        <dbReference type="Rhea" id="RHEA:12292"/>
        <dbReference type="Rhea" id="RHEA-COMP:9669"/>
        <dbReference type="Rhea" id="RHEA-COMP:9703"/>
        <dbReference type="ChEBI" id="CHEBI:15378"/>
        <dbReference type="ChEBI" id="CHEBI:30616"/>
        <dbReference type="ChEBI" id="CHEBI:33019"/>
        <dbReference type="ChEBI" id="CHEBI:33384"/>
        <dbReference type="ChEBI" id="CHEBI:78442"/>
        <dbReference type="ChEBI" id="CHEBI:78533"/>
        <dbReference type="ChEBI" id="CHEBI:456215"/>
        <dbReference type="EC" id="6.1.1.11"/>
    </reaction>
</comment>
<comment type="catalytic activity">
    <reaction evidence="1">
        <text>tRNA(Sec) + L-serine + ATP = L-seryl-tRNA(Sec) + AMP + diphosphate + H(+)</text>
        <dbReference type="Rhea" id="RHEA:42580"/>
        <dbReference type="Rhea" id="RHEA-COMP:9742"/>
        <dbReference type="Rhea" id="RHEA-COMP:10128"/>
        <dbReference type="ChEBI" id="CHEBI:15378"/>
        <dbReference type="ChEBI" id="CHEBI:30616"/>
        <dbReference type="ChEBI" id="CHEBI:33019"/>
        <dbReference type="ChEBI" id="CHEBI:33384"/>
        <dbReference type="ChEBI" id="CHEBI:78442"/>
        <dbReference type="ChEBI" id="CHEBI:78533"/>
        <dbReference type="ChEBI" id="CHEBI:456215"/>
        <dbReference type="EC" id="6.1.1.11"/>
    </reaction>
</comment>
<comment type="pathway">
    <text evidence="1">Aminoacyl-tRNA biosynthesis; selenocysteinyl-tRNA(Sec) biosynthesis; L-seryl-tRNA(Sec) from L-serine and tRNA(Sec): step 1/1.</text>
</comment>
<comment type="subunit">
    <text evidence="1">Homodimer. The tRNA molecule binds across the dimer.</text>
</comment>
<comment type="subcellular location">
    <subcellularLocation>
        <location evidence="1">Cytoplasm</location>
    </subcellularLocation>
</comment>
<comment type="domain">
    <text evidence="1">Consists of two distinct domains, a catalytic core and a N-terminal extension that is involved in tRNA binding.</text>
</comment>
<comment type="similarity">
    <text evidence="1">Belongs to the class-II aminoacyl-tRNA synthetase family. Type-1 seryl-tRNA synthetase subfamily.</text>
</comment>
<name>SYS_BRUC2</name>
<accession>A9MAQ8</accession>
<feature type="chain" id="PRO_1000077187" description="Serine--tRNA ligase">
    <location>
        <begin position="1"/>
        <end position="427"/>
    </location>
</feature>
<feature type="binding site" evidence="1">
    <location>
        <begin position="231"/>
        <end position="233"/>
    </location>
    <ligand>
        <name>L-serine</name>
        <dbReference type="ChEBI" id="CHEBI:33384"/>
    </ligand>
</feature>
<feature type="binding site" evidence="1">
    <location>
        <begin position="262"/>
        <end position="264"/>
    </location>
    <ligand>
        <name>ATP</name>
        <dbReference type="ChEBI" id="CHEBI:30616"/>
    </ligand>
</feature>
<feature type="binding site" evidence="1">
    <location>
        <position position="285"/>
    </location>
    <ligand>
        <name>L-serine</name>
        <dbReference type="ChEBI" id="CHEBI:33384"/>
    </ligand>
</feature>
<feature type="binding site" evidence="1">
    <location>
        <begin position="349"/>
        <end position="352"/>
    </location>
    <ligand>
        <name>ATP</name>
        <dbReference type="ChEBI" id="CHEBI:30616"/>
    </ligand>
</feature>
<feature type="binding site" evidence="1">
    <location>
        <position position="385"/>
    </location>
    <ligand>
        <name>L-serine</name>
        <dbReference type="ChEBI" id="CHEBI:33384"/>
    </ligand>
</feature>
<sequence length="427" mass="47530">MLDIKWIRENPETLDKALAKRGAAPLSSELIALDEKRREHVGKVQAAQERRNAASKEIGKAMAAKDMGTAEKLKAEVGELKDFLAHAEEDERRLSKELSDALSTIPNIPLDDVPLGKDESDNVELRRIGNPHNFSFQPKEHFELGEALGYMDFERAAKLAGARFTVLKGPLARLERALGQFMLDLHTTEHGYTEVMPPLMVRDEAVYGTGQLPKFSEDLFRTTDGRWLIPTAEVPLTNLVAEEIVDMKGLPLRFTALTPCFRSEAGSAGRDTRGMLRQHQFLKVEMVSITDAESSVAEHERMTACAEEVLKRLGLPFRTVVLCTGDMGFGAQRTYDIEVWLPGQNTYREISSCSTCGDFQGRRMNARYRPEGEKSTRFVHTLNGSGVAVGRALIAVMENYQQEDGSIHIPEALQPYIGGLTRIEKAA</sequence>
<evidence type="ECO:0000255" key="1">
    <source>
        <dbReference type="HAMAP-Rule" id="MF_00176"/>
    </source>
</evidence>
<reference key="1">
    <citation type="submission" date="2007-10" db="EMBL/GenBank/DDBJ databases">
        <title>Brucella canis ATCC 23365 whole genome shotgun sequencing project.</title>
        <authorList>
            <person name="Setubal J.C."/>
            <person name="Bowns C."/>
            <person name="Boyle S."/>
            <person name="Crasta O.R."/>
            <person name="Czar M.J."/>
            <person name="Dharmanolla C."/>
            <person name="Gillespie J.J."/>
            <person name="Kenyon R.W."/>
            <person name="Lu J."/>
            <person name="Mane S."/>
            <person name="Mohapatra S."/>
            <person name="Nagrani S."/>
            <person name="Purkayastha A."/>
            <person name="Rajasimha H.K."/>
            <person name="Shallom J.M."/>
            <person name="Shallom S."/>
            <person name="Shukla M."/>
            <person name="Snyder E.E."/>
            <person name="Sobral B.W."/>
            <person name="Wattam A.R."/>
            <person name="Will R."/>
            <person name="Williams K."/>
            <person name="Yoo H."/>
            <person name="Bruce D."/>
            <person name="Detter C."/>
            <person name="Munk C."/>
            <person name="Brettin T.S."/>
        </authorList>
    </citation>
    <scope>NUCLEOTIDE SEQUENCE [LARGE SCALE GENOMIC DNA]</scope>
    <source>
        <strain>ATCC 23365 / NCTC 10854 / RM-666</strain>
    </source>
</reference>
<keyword id="KW-0030">Aminoacyl-tRNA synthetase</keyword>
<keyword id="KW-0067">ATP-binding</keyword>
<keyword id="KW-0963">Cytoplasm</keyword>
<keyword id="KW-0436">Ligase</keyword>
<keyword id="KW-0547">Nucleotide-binding</keyword>
<keyword id="KW-0648">Protein biosynthesis</keyword>
<keyword id="KW-1185">Reference proteome</keyword>
<gene>
    <name evidence="1" type="primary">serS</name>
    <name type="ordered locus">BCAN_A0899</name>
</gene>
<protein>
    <recommendedName>
        <fullName evidence="1">Serine--tRNA ligase</fullName>
        <ecNumber evidence="1">6.1.1.11</ecNumber>
    </recommendedName>
    <alternativeName>
        <fullName evidence="1">Seryl-tRNA synthetase</fullName>
        <shortName evidence="1">SerRS</shortName>
    </alternativeName>
    <alternativeName>
        <fullName evidence="1">Seryl-tRNA(Ser/Sec) synthetase</fullName>
    </alternativeName>
</protein>
<organism>
    <name type="scientific">Brucella canis (strain ATCC 23365 / NCTC 10854 / RM-666)</name>
    <dbReference type="NCBI Taxonomy" id="483179"/>
    <lineage>
        <taxon>Bacteria</taxon>
        <taxon>Pseudomonadati</taxon>
        <taxon>Pseudomonadota</taxon>
        <taxon>Alphaproteobacteria</taxon>
        <taxon>Hyphomicrobiales</taxon>
        <taxon>Brucellaceae</taxon>
        <taxon>Brucella/Ochrobactrum group</taxon>
        <taxon>Brucella</taxon>
    </lineage>
</organism>
<proteinExistence type="inferred from homology"/>
<dbReference type="EC" id="6.1.1.11" evidence="1"/>
<dbReference type="EMBL" id="CP000872">
    <property type="protein sequence ID" value="ABX61961.1"/>
    <property type="molecule type" value="Genomic_DNA"/>
</dbReference>
<dbReference type="RefSeq" id="WP_004690784.1">
    <property type="nucleotide sequence ID" value="NC_010103.1"/>
</dbReference>
<dbReference type="SMR" id="A9MAQ8"/>
<dbReference type="GeneID" id="55590590"/>
<dbReference type="KEGG" id="bcs:BCAN_A0899"/>
<dbReference type="HOGENOM" id="CLU_023797_1_1_5"/>
<dbReference type="PhylomeDB" id="A9MAQ8"/>
<dbReference type="UniPathway" id="UPA00906">
    <property type="reaction ID" value="UER00895"/>
</dbReference>
<dbReference type="Proteomes" id="UP000001385">
    <property type="component" value="Chromosome I"/>
</dbReference>
<dbReference type="GO" id="GO:0005737">
    <property type="term" value="C:cytoplasm"/>
    <property type="evidence" value="ECO:0007669"/>
    <property type="project" value="UniProtKB-SubCell"/>
</dbReference>
<dbReference type="GO" id="GO:0005524">
    <property type="term" value="F:ATP binding"/>
    <property type="evidence" value="ECO:0007669"/>
    <property type="project" value="UniProtKB-UniRule"/>
</dbReference>
<dbReference type="GO" id="GO:0004828">
    <property type="term" value="F:serine-tRNA ligase activity"/>
    <property type="evidence" value="ECO:0007669"/>
    <property type="project" value="UniProtKB-UniRule"/>
</dbReference>
<dbReference type="GO" id="GO:0016260">
    <property type="term" value="P:selenocysteine biosynthetic process"/>
    <property type="evidence" value="ECO:0007669"/>
    <property type="project" value="UniProtKB-UniRule"/>
</dbReference>
<dbReference type="GO" id="GO:0006434">
    <property type="term" value="P:seryl-tRNA aminoacylation"/>
    <property type="evidence" value="ECO:0007669"/>
    <property type="project" value="UniProtKB-UniRule"/>
</dbReference>
<dbReference type="CDD" id="cd00770">
    <property type="entry name" value="SerRS_core"/>
    <property type="match status" value="1"/>
</dbReference>
<dbReference type="Gene3D" id="3.30.930.10">
    <property type="entry name" value="Bira Bifunctional Protein, Domain 2"/>
    <property type="match status" value="1"/>
</dbReference>
<dbReference type="Gene3D" id="1.10.287.40">
    <property type="entry name" value="Serine-tRNA synthetase, tRNA binding domain"/>
    <property type="match status" value="1"/>
</dbReference>
<dbReference type="HAMAP" id="MF_00176">
    <property type="entry name" value="Ser_tRNA_synth_type1"/>
    <property type="match status" value="1"/>
</dbReference>
<dbReference type="InterPro" id="IPR002314">
    <property type="entry name" value="aa-tRNA-synt_IIb"/>
</dbReference>
<dbReference type="InterPro" id="IPR006195">
    <property type="entry name" value="aa-tRNA-synth_II"/>
</dbReference>
<dbReference type="InterPro" id="IPR045864">
    <property type="entry name" value="aa-tRNA-synth_II/BPL/LPL"/>
</dbReference>
<dbReference type="InterPro" id="IPR002317">
    <property type="entry name" value="Ser-tRNA-ligase_type_1"/>
</dbReference>
<dbReference type="InterPro" id="IPR015866">
    <property type="entry name" value="Ser-tRNA-synth_1_N"/>
</dbReference>
<dbReference type="InterPro" id="IPR042103">
    <property type="entry name" value="SerRS_1_N_sf"/>
</dbReference>
<dbReference type="InterPro" id="IPR033729">
    <property type="entry name" value="SerRS_core"/>
</dbReference>
<dbReference type="InterPro" id="IPR010978">
    <property type="entry name" value="tRNA-bd_arm"/>
</dbReference>
<dbReference type="NCBIfam" id="TIGR00414">
    <property type="entry name" value="serS"/>
    <property type="match status" value="1"/>
</dbReference>
<dbReference type="PANTHER" id="PTHR43697:SF1">
    <property type="entry name" value="SERINE--TRNA LIGASE"/>
    <property type="match status" value="1"/>
</dbReference>
<dbReference type="PANTHER" id="PTHR43697">
    <property type="entry name" value="SERYL-TRNA SYNTHETASE"/>
    <property type="match status" value="1"/>
</dbReference>
<dbReference type="Pfam" id="PF02403">
    <property type="entry name" value="Seryl_tRNA_N"/>
    <property type="match status" value="1"/>
</dbReference>
<dbReference type="Pfam" id="PF00587">
    <property type="entry name" value="tRNA-synt_2b"/>
    <property type="match status" value="1"/>
</dbReference>
<dbReference type="PIRSF" id="PIRSF001529">
    <property type="entry name" value="Ser-tRNA-synth_IIa"/>
    <property type="match status" value="1"/>
</dbReference>
<dbReference type="PRINTS" id="PR00981">
    <property type="entry name" value="TRNASYNTHSER"/>
</dbReference>
<dbReference type="SUPFAM" id="SSF55681">
    <property type="entry name" value="Class II aaRS and biotin synthetases"/>
    <property type="match status" value="1"/>
</dbReference>
<dbReference type="SUPFAM" id="SSF46589">
    <property type="entry name" value="tRNA-binding arm"/>
    <property type="match status" value="1"/>
</dbReference>
<dbReference type="PROSITE" id="PS50862">
    <property type="entry name" value="AA_TRNA_LIGASE_II"/>
    <property type="match status" value="1"/>
</dbReference>